<gene>
    <name type="primary">dlg1l</name>
</gene>
<sequence length="827" mass="91496">MSPSIKKLDCFSPMLCHCKVACTNSTISLMFGCKKYRHQDEDTGSPQEPSSPQFTDDTPGPELVQVAEKSLSQIENVHGFVAHSHISPMKVESLECIFDGPSPVVKEESPPSPSTPLSNPYPQSPVSVQANPPPVVVNTESLDSAPYVNGTEADFEYEEITLERGNSGLGFSIAGGTDNPHIGEDPSIFITKVIPGGAAAQDGRLRVNDVILRVNEVDVRDVTHSKAVEALKEAGSLVRLYVRRRKSASEKVMEIKLIKGPKGLGFSIAGGVGNQHIPGDNSIYVTKIIEGGAAHKDGRLQIGDKLLAVNSSCLEEVTHEHAVTALKNTPDVVYLKVAKPNSVFMNDSFAPPDITNSYSQHMENHISPPSYLSQPLPPVHSGRFSPTPKTTVGDDDVTREPRKVVLHRGTTGLGFNIVGGEDGEGIFISFILAGGPADLCGELRKGDRLVSVNGIDLRGATHEQAAAALKNAGQTVTIVAQYRPEEYSRFEAKIHDLREQMMNSSISSGSGSLRTSQKRSLYVRALFDYDKTKDSGLPSQGLNFKFGDILHVVNASDDEWWQARQVTAQGEVEEMGVIPSKRRVEKKERARLKTVKFNSKSREKGDNPDDMLSKGQSGQEEYVLSYEPVSQQEVNYSRPVIILGPMKDRVNDDLISEFPDKFGSCVPHTTRPKRDYEVDGRDYHFVVSREQMERDIQEHKFIEAGQYNSHLYGTSVQSVREVAEKGKHCILDVSGNAIKRLQVAMLYPIGIFIKPKSVENIMEMNKRLTEEQGRKTYDRAMKLEQEFMEHFTAIVQGDTLEEIYDQVKQIIEEQSGPYIWVQSKEKL</sequence>
<name>DLG1L_DANRE</name>
<dbReference type="EMBL" id="AY819035">
    <property type="protein sequence ID" value="AAV68500.1"/>
    <property type="molecule type" value="mRNA"/>
</dbReference>
<dbReference type="RefSeq" id="NP_001012388.1">
    <property type="nucleotide sequence ID" value="NM_001012388.1"/>
</dbReference>
<dbReference type="SMR" id="Q5PYH5"/>
<dbReference type="FunCoup" id="Q5PYH5">
    <property type="interactions" value="438"/>
</dbReference>
<dbReference type="STRING" id="7955.ENSDARP00000132280"/>
<dbReference type="PaxDb" id="7955-ENSDARP00000061428"/>
<dbReference type="Ensembl" id="ENSDART00000164506">
    <property type="protein sequence ID" value="ENSDARP00000132280"/>
    <property type="gene ID" value="ENSDARG00000102216"/>
</dbReference>
<dbReference type="GeneID" id="497648"/>
<dbReference type="KEGG" id="dre:497648"/>
<dbReference type="AGR" id="ZFIN:ZDB-GENE-050222-3"/>
<dbReference type="CTD" id="497648"/>
<dbReference type="ZFIN" id="ZDB-GENE-050222-3">
    <property type="gene designation" value="dlg1b"/>
</dbReference>
<dbReference type="eggNOG" id="KOG0708">
    <property type="taxonomic scope" value="Eukaryota"/>
</dbReference>
<dbReference type="HOGENOM" id="CLU_001715_4_2_1"/>
<dbReference type="InParanoid" id="Q5PYH5"/>
<dbReference type="OrthoDB" id="78824at2759"/>
<dbReference type="PhylomeDB" id="Q5PYH5"/>
<dbReference type="TreeFam" id="TF323171"/>
<dbReference type="Reactome" id="R-DRE-438066">
    <property type="pathway name" value="Unblocking of NMDA receptors, glutamate binding and activation"/>
</dbReference>
<dbReference type="Reactome" id="R-DRE-8849932">
    <property type="pathway name" value="Synaptic adhesion-like molecules"/>
</dbReference>
<dbReference type="PRO" id="PR:Q5PYH5"/>
<dbReference type="Proteomes" id="UP000000437">
    <property type="component" value="Chromosome 2"/>
</dbReference>
<dbReference type="Bgee" id="ENSDARG00000102216">
    <property type="expression patterns" value="Expressed in muscle tissue and 28 other cell types or tissues"/>
</dbReference>
<dbReference type="ExpressionAtlas" id="Q5PYH5">
    <property type="expression patterns" value="baseline and differential"/>
</dbReference>
<dbReference type="GO" id="GO:0016323">
    <property type="term" value="C:basolateral plasma membrane"/>
    <property type="evidence" value="ECO:0000250"/>
    <property type="project" value="UniProtKB"/>
</dbReference>
<dbReference type="GO" id="GO:0031594">
    <property type="term" value="C:neuromuscular junction"/>
    <property type="evidence" value="ECO:0000318"/>
    <property type="project" value="GO_Central"/>
</dbReference>
<dbReference type="GO" id="GO:0043005">
    <property type="term" value="C:neuron projection"/>
    <property type="evidence" value="ECO:0000318"/>
    <property type="project" value="GO_Central"/>
</dbReference>
<dbReference type="GO" id="GO:0098839">
    <property type="term" value="C:postsynaptic density membrane"/>
    <property type="evidence" value="ECO:0000318"/>
    <property type="project" value="GO_Central"/>
</dbReference>
<dbReference type="GO" id="GO:0035255">
    <property type="term" value="F:ionotropic glutamate receptor binding"/>
    <property type="evidence" value="ECO:0000318"/>
    <property type="project" value="GO_Central"/>
</dbReference>
<dbReference type="GO" id="GO:0019902">
    <property type="term" value="F:phosphatase binding"/>
    <property type="evidence" value="ECO:0000250"/>
    <property type="project" value="UniProtKB"/>
</dbReference>
<dbReference type="GO" id="GO:0019901">
    <property type="term" value="F:protein kinase binding"/>
    <property type="evidence" value="ECO:0000318"/>
    <property type="project" value="GO_Central"/>
</dbReference>
<dbReference type="GO" id="GO:0007015">
    <property type="term" value="P:actin filament organization"/>
    <property type="evidence" value="ECO:0000250"/>
    <property type="project" value="UniProtKB"/>
</dbReference>
<dbReference type="GO" id="GO:0098609">
    <property type="term" value="P:cell-cell adhesion"/>
    <property type="evidence" value="ECO:0000250"/>
    <property type="project" value="UniProtKB"/>
</dbReference>
<dbReference type="GO" id="GO:0007268">
    <property type="term" value="P:chemical synaptic transmission"/>
    <property type="evidence" value="ECO:0000318"/>
    <property type="project" value="GO_Central"/>
</dbReference>
<dbReference type="GO" id="GO:0030866">
    <property type="term" value="P:cortical actin cytoskeleton organization"/>
    <property type="evidence" value="ECO:0000250"/>
    <property type="project" value="UniProtKB"/>
</dbReference>
<dbReference type="GO" id="GO:0001935">
    <property type="term" value="P:endothelial cell proliferation"/>
    <property type="evidence" value="ECO:0000250"/>
    <property type="project" value="UniProtKB"/>
</dbReference>
<dbReference type="GO" id="GO:0045197">
    <property type="term" value="P:establishment or maintenance of epithelial cell apical/basal polarity"/>
    <property type="evidence" value="ECO:0000318"/>
    <property type="project" value="GO_Central"/>
</dbReference>
<dbReference type="GO" id="GO:2000134">
    <property type="term" value="P:negative regulation of G1/S transition of mitotic cell cycle"/>
    <property type="evidence" value="ECO:0000250"/>
    <property type="project" value="UniProtKB"/>
</dbReference>
<dbReference type="GO" id="GO:0007399">
    <property type="term" value="P:nervous system development"/>
    <property type="evidence" value="ECO:0000318"/>
    <property type="project" value="GO_Central"/>
</dbReference>
<dbReference type="GO" id="GO:0035418">
    <property type="term" value="P:protein localization to synapse"/>
    <property type="evidence" value="ECO:0000318"/>
    <property type="project" value="GO_Central"/>
</dbReference>
<dbReference type="GO" id="GO:0043113">
    <property type="term" value="P:receptor clustering"/>
    <property type="evidence" value="ECO:0000318"/>
    <property type="project" value="GO_Central"/>
</dbReference>
<dbReference type="GO" id="GO:0097120">
    <property type="term" value="P:receptor localization to synapse"/>
    <property type="evidence" value="ECO:0000318"/>
    <property type="project" value="GO_Central"/>
</dbReference>
<dbReference type="GO" id="GO:0099072">
    <property type="term" value="P:regulation of postsynaptic membrane neurotransmitter receptor levels"/>
    <property type="evidence" value="ECO:0000318"/>
    <property type="project" value="GO_Central"/>
</dbReference>
<dbReference type="GO" id="GO:0050808">
    <property type="term" value="P:synapse organization"/>
    <property type="evidence" value="ECO:0000303"/>
    <property type="project" value="UniProtKB"/>
</dbReference>
<dbReference type="CDD" id="cd00071">
    <property type="entry name" value="GMPK"/>
    <property type="match status" value="1"/>
</dbReference>
<dbReference type="CDD" id="cd06723">
    <property type="entry name" value="PDZ1_Dlg1-2-4-like"/>
    <property type="match status" value="1"/>
</dbReference>
<dbReference type="CDD" id="cd06724">
    <property type="entry name" value="PDZ2_Dlg1-2-4-like"/>
    <property type="match status" value="1"/>
</dbReference>
<dbReference type="CDD" id="cd06795">
    <property type="entry name" value="PDZ3_Dlg1-2-4-like"/>
    <property type="match status" value="1"/>
</dbReference>
<dbReference type="CDD" id="cd12031">
    <property type="entry name" value="SH3_DLG1"/>
    <property type="match status" value="1"/>
</dbReference>
<dbReference type="FunFam" id="3.40.50.300:FF:001402">
    <property type="entry name" value="Discs, large homolog 3 (Drosophila)"/>
    <property type="match status" value="1"/>
</dbReference>
<dbReference type="FunFam" id="2.30.42.10:FF:000001">
    <property type="entry name" value="Disks large homolog 1 isoform 2"/>
    <property type="match status" value="1"/>
</dbReference>
<dbReference type="FunFam" id="3.30.63.10:FF:000001">
    <property type="entry name" value="Disks large homolog 1 isoform 2"/>
    <property type="match status" value="1"/>
</dbReference>
<dbReference type="FunFam" id="2.30.30.40:FF:000058">
    <property type="entry name" value="Disks large homolog 1 isoform X1"/>
    <property type="match status" value="1"/>
</dbReference>
<dbReference type="FunFam" id="2.30.42.10:FF:000049">
    <property type="entry name" value="disks large homolog 1 isoform X1"/>
    <property type="match status" value="1"/>
</dbReference>
<dbReference type="FunFam" id="2.30.42.10:FF:000002">
    <property type="entry name" value="Disks large homolog 4 isoform 2"/>
    <property type="match status" value="1"/>
</dbReference>
<dbReference type="Gene3D" id="2.30.42.10">
    <property type="match status" value="3"/>
</dbReference>
<dbReference type="Gene3D" id="3.30.63.10">
    <property type="entry name" value="Guanylate Kinase phosphate binding domain"/>
    <property type="match status" value="1"/>
</dbReference>
<dbReference type="Gene3D" id="3.40.50.300">
    <property type="entry name" value="P-loop containing nucleotide triphosphate hydrolases"/>
    <property type="match status" value="1"/>
</dbReference>
<dbReference type="Gene3D" id="2.30.30.40">
    <property type="entry name" value="SH3 Domains"/>
    <property type="match status" value="1"/>
</dbReference>
<dbReference type="InterPro" id="IPR019583">
    <property type="entry name" value="DLG1-4_PDZ_assoc"/>
</dbReference>
<dbReference type="InterPro" id="IPR016313">
    <property type="entry name" value="DLG1-like"/>
</dbReference>
<dbReference type="InterPro" id="IPR019590">
    <property type="entry name" value="DLG1_PEST_dom"/>
</dbReference>
<dbReference type="InterPro" id="IPR008145">
    <property type="entry name" value="GK/Ca_channel_bsu"/>
</dbReference>
<dbReference type="InterPro" id="IPR008144">
    <property type="entry name" value="Guanylate_kin-like_dom"/>
</dbReference>
<dbReference type="InterPro" id="IPR020590">
    <property type="entry name" value="Guanylate_kinase_CS"/>
</dbReference>
<dbReference type="InterPro" id="IPR027417">
    <property type="entry name" value="P-loop_NTPase"/>
</dbReference>
<dbReference type="InterPro" id="IPR001478">
    <property type="entry name" value="PDZ"/>
</dbReference>
<dbReference type="InterPro" id="IPR036034">
    <property type="entry name" value="PDZ_sf"/>
</dbReference>
<dbReference type="InterPro" id="IPR036028">
    <property type="entry name" value="SH3-like_dom_sf"/>
</dbReference>
<dbReference type="InterPro" id="IPR001452">
    <property type="entry name" value="SH3_domain"/>
</dbReference>
<dbReference type="InterPro" id="IPR050614">
    <property type="entry name" value="Synaptic_Scaffolding_LAP-MAGUK"/>
</dbReference>
<dbReference type="PANTHER" id="PTHR23119">
    <property type="entry name" value="DISCS LARGE"/>
    <property type="match status" value="1"/>
</dbReference>
<dbReference type="PANTHER" id="PTHR23119:SF5">
    <property type="entry name" value="DISKS LARGE HOMOLOG 1"/>
    <property type="match status" value="1"/>
</dbReference>
<dbReference type="Pfam" id="PF00625">
    <property type="entry name" value="Guanylate_kin"/>
    <property type="match status" value="1"/>
</dbReference>
<dbReference type="Pfam" id="PF10608">
    <property type="entry name" value="MAGUK_N_PEST"/>
    <property type="match status" value="1"/>
</dbReference>
<dbReference type="Pfam" id="PF00595">
    <property type="entry name" value="PDZ"/>
    <property type="match status" value="3"/>
</dbReference>
<dbReference type="Pfam" id="PF10600">
    <property type="entry name" value="PDZ_assoc"/>
    <property type="match status" value="1"/>
</dbReference>
<dbReference type="Pfam" id="PF00018">
    <property type="entry name" value="SH3_1"/>
    <property type="match status" value="1"/>
</dbReference>
<dbReference type="PIRSF" id="PIRSF001741">
    <property type="entry name" value="MAGUK_DLGH"/>
    <property type="match status" value="1"/>
</dbReference>
<dbReference type="SMART" id="SM00072">
    <property type="entry name" value="GuKc"/>
    <property type="match status" value="1"/>
</dbReference>
<dbReference type="SMART" id="SM01277">
    <property type="entry name" value="MAGUK_N_PEST"/>
    <property type="match status" value="1"/>
</dbReference>
<dbReference type="SMART" id="SM00228">
    <property type="entry name" value="PDZ"/>
    <property type="match status" value="3"/>
</dbReference>
<dbReference type="SMART" id="SM00326">
    <property type="entry name" value="SH3"/>
    <property type="match status" value="1"/>
</dbReference>
<dbReference type="SUPFAM" id="SSF52540">
    <property type="entry name" value="P-loop containing nucleoside triphosphate hydrolases"/>
    <property type="match status" value="1"/>
</dbReference>
<dbReference type="SUPFAM" id="SSF50156">
    <property type="entry name" value="PDZ domain-like"/>
    <property type="match status" value="3"/>
</dbReference>
<dbReference type="SUPFAM" id="SSF50044">
    <property type="entry name" value="SH3-domain"/>
    <property type="match status" value="1"/>
</dbReference>
<dbReference type="PROSITE" id="PS00856">
    <property type="entry name" value="GUANYLATE_KINASE_1"/>
    <property type="match status" value="1"/>
</dbReference>
<dbReference type="PROSITE" id="PS50052">
    <property type="entry name" value="GUANYLATE_KINASE_2"/>
    <property type="match status" value="1"/>
</dbReference>
<dbReference type="PROSITE" id="PS50106">
    <property type="entry name" value="PDZ"/>
    <property type="match status" value="3"/>
</dbReference>
<dbReference type="PROSITE" id="PS50002">
    <property type="entry name" value="SH3"/>
    <property type="match status" value="1"/>
</dbReference>
<organism>
    <name type="scientific">Danio rerio</name>
    <name type="common">Zebrafish</name>
    <name type="synonym">Brachydanio rerio</name>
    <dbReference type="NCBI Taxonomy" id="7955"/>
    <lineage>
        <taxon>Eukaryota</taxon>
        <taxon>Metazoa</taxon>
        <taxon>Chordata</taxon>
        <taxon>Craniata</taxon>
        <taxon>Vertebrata</taxon>
        <taxon>Euteleostomi</taxon>
        <taxon>Actinopterygii</taxon>
        <taxon>Neopterygii</taxon>
        <taxon>Teleostei</taxon>
        <taxon>Ostariophysi</taxon>
        <taxon>Cypriniformes</taxon>
        <taxon>Danionidae</taxon>
        <taxon>Danioninae</taxon>
        <taxon>Danio</taxon>
    </lineage>
</organism>
<comment type="function">
    <text>May play a role in synapse assembly and function.</text>
</comment>
<comment type="subcellular location">
    <subcellularLocation>
        <location evidence="1">Membrane</location>
        <topology evidence="1">Peripheral membrane protein</topology>
    </subcellularLocation>
</comment>
<comment type="developmental stage">
    <text evidence="6">At 4 days-post-fertilization (dpf), expressed in the inner and outer plexiform layers of the retina, the marginal zone of the tegmentum, the developing craniofacial cartilage and in the ventral spinal cord.</text>
</comment>
<comment type="similarity">
    <text evidence="7">Belongs to the MAGUK family.</text>
</comment>
<keyword id="KW-0472">Membrane</keyword>
<keyword id="KW-1185">Reference proteome</keyword>
<keyword id="KW-0677">Repeat</keyword>
<keyword id="KW-0728">SH3 domain</keyword>
<proteinExistence type="evidence at transcript level"/>
<protein>
    <recommendedName>
        <fullName>Discs large homolog 1-like protein</fullName>
    </recommendedName>
    <alternativeName>
        <fullName>Synapse-associated protein 97B</fullName>
        <shortName>SAP-97B</shortName>
        <shortName>SAP97B</shortName>
    </alternativeName>
</protein>
<feature type="chain" id="PRO_0000094552" description="Discs large homolog 1-like protein">
    <location>
        <begin position="1"/>
        <end position="827"/>
    </location>
</feature>
<feature type="domain" description="PDZ 1" evidence="3">
    <location>
        <begin position="159"/>
        <end position="246"/>
    </location>
</feature>
<feature type="domain" description="PDZ 2" evidence="3">
    <location>
        <begin position="254"/>
        <end position="341"/>
    </location>
</feature>
<feature type="domain" description="PDZ 3" evidence="3">
    <location>
        <begin position="403"/>
        <end position="484"/>
    </location>
</feature>
<feature type="domain" description="SH3" evidence="4">
    <location>
        <begin position="518"/>
        <end position="588"/>
    </location>
</feature>
<feature type="domain" description="Guanylate kinase-like" evidence="2">
    <location>
        <begin position="637"/>
        <end position="812"/>
    </location>
</feature>
<feature type="region of interest" description="Disordered" evidence="5">
    <location>
        <begin position="38"/>
        <end position="61"/>
    </location>
</feature>
<feature type="region of interest" description="Disordered" evidence="5">
    <location>
        <begin position="102"/>
        <end position="133"/>
    </location>
</feature>
<feature type="region of interest" description="Disordered" evidence="5">
    <location>
        <begin position="595"/>
        <end position="618"/>
    </location>
</feature>
<feature type="compositionally biased region" description="Polar residues" evidence="5">
    <location>
        <begin position="44"/>
        <end position="56"/>
    </location>
</feature>
<evidence type="ECO:0000250" key="1"/>
<evidence type="ECO:0000255" key="2">
    <source>
        <dbReference type="PROSITE-ProRule" id="PRU00100"/>
    </source>
</evidence>
<evidence type="ECO:0000255" key="3">
    <source>
        <dbReference type="PROSITE-ProRule" id="PRU00143"/>
    </source>
</evidence>
<evidence type="ECO:0000255" key="4">
    <source>
        <dbReference type="PROSITE-ProRule" id="PRU00192"/>
    </source>
</evidence>
<evidence type="ECO:0000256" key="5">
    <source>
        <dbReference type="SAM" id="MobiDB-lite"/>
    </source>
</evidence>
<evidence type="ECO:0000269" key="6">
    <source>
    </source>
</evidence>
<evidence type="ECO:0000305" key="7"/>
<accession>Q5PYH5</accession>
<reference key="1">
    <citation type="journal article" date="2005" name="J. Neurobiol.">
        <title>Characterization of zebrafish PSD-95 gene family members.</title>
        <authorList>
            <person name="Meyer M.P."/>
            <person name="Trimmer J.S."/>
            <person name="Gilthorpe J.D."/>
            <person name="Smith S.J."/>
        </authorList>
    </citation>
    <scope>NUCLEOTIDE SEQUENCE [MRNA]</scope>
    <scope>DEVELOPMENTAL STAGE</scope>
</reference>